<evidence type="ECO:0000255" key="1">
    <source>
        <dbReference type="HAMAP-Rule" id="MF_00303"/>
    </source>
</evidence>
<proteinExistence type="inferred from homology"/>
<comment type="function">
    <text evidence="1">Involved in protein export. Acts as a chaperone by maintaining the newly synthesized protein in an open conformation. Functions as a peptidyl-prolyl cis-trans isomerase.</text>
</comment>
<comment type="catalytic activity">
    <reaction evidence="1">
        <text>[protein]-peptidylproline (omega=180) = [protein]-peptidylproline (omega=0)</text>
        <dbReference type="Rhea" id="RHEA:16237"/>
        <dbReference type="Rhea" id="RHEA-COMP:10747"/>
        <dbReference type="Rhea" id="RHEA-COMP:10748"/>
        <dbReference type="ChEBI" id="CHEBI:83833"/>
        <dbReference type="ChEBI" id="CHEBI:83834"/>
        <dbReference type="EC" id="5.2.1.8"/>
    </reaction>
</comment>
<comment type="subcellular location">
    <subcellularLocation>
        <location>Cytoplasm</location>
    </subcellularLocation>
    <text evidence="1">About half TF is bound to the ribosome near the polypeptide exit tunnel while the other half is free in the cytoplasm.</text>
</comment>
<comment type="domain">
    <text evidence="1">Consists of 3 domains; the N-terminus binds the ribosome, the middle domain has PPIase activity, while the C-terminus has intrinsic chaperone activity on its own.</text>
</comment>
<comment type="similarity">
    <text evidence="1">Belongs to the FKBP-type PPIase family. Tig subfamily.</text>
</comment>
<protein>
    <recommendedName>
        <fullName evidence="1">Trigger factor</fullName>
        <shortName evidence="1">TF</shortName>
        <ecNumber evidence="1">5.2.1.8</ecNumber>
    </recommendedName>
    <alternativeName>
        <fullName evidence="1">PPIase</fullName>
    </alternativeName>
</protein>
<feature type="chain" id="PRO_0000256566" description="Trigger factor">
    <location>
        <begin position="1"/>
        <end position="441"/>
    </location>
</feature>
<feature type="domain" description="PPIase FKBP-type" evidence="1">
    <location>
        <begin position="163"/>
        <end position="248"/>
    </location>
</feature>
<organism>
    <name type="scientific">Jannaschia sp. (strain CCS1)</name>
    <dbReference type="NCBI Taxonomy" id="290400"/>
    <lineage>
        <taxon>Bacteria</taxon>
        <taxon>Pseudomonadati</taxon>
        <taxon>Pseudomonadota</taxon>
        <taxon>Alphaproteobacteria</taxon>
        <taxon>Rhodobacterales</taxon>
        <taxon>Roseobacteraceae</taxon>
        <taxon>Jannaschia</taxon>
    </lineage>
</organism>
<keyword id="KW-0131">Cell cycle</keyword>
<keyword id="KW-0132">Cell division</keyword>
<keyword id="KW-0143">Chaperone</keyword>
<keyword id="KW-0963">Cytoplasm</keyword>
<keyword id="KW-0413">Isomerase</keyword>
<keyword id="KW-1185">Reference proteome</keyword>
<keyword id="KW-0697">Rotamase</keyword>
<sequence length="441" mass="48795">MQITETLAEGLKREYTITVPASDLEARVNTKLEEARPEVEMKGFRKGKVPMALLKKQFGPKVMGEAMQESVDEAMQGHLDESGDRPALQPEVKMTNEDWKEGDDIVVSMAYEKLPEIPDVDYKAIKLEKLVVTPGDDEVKEALDNLAENAESFATKKGKAADGDQVVFDFVGTVDGEAFEGGSAEDFPLKLGSGQFIPGFEEQLVGVKAKDEKDVEVSFPEDYQAEHLAGKAAVFACTIKEVKKPVPAEVDDELAKKFGAEDLEALKGQISERLGTEYKGAARAVMKRSLLDQLDDVVSFELPPSLVEAEAKQIAHQLWHEENPEVEGHDHPEIETTEEHTSLAARRVKLGLLLAELGQKNDVTVSDAEMTQAIMTQARQYPGQERAFFEFIQQNQQAQQQVRAPLFEDKVVDFIGEMAEVSEKEVSKDDLKAAVDALDEE</sequence>
<accession>Q28RY2</accession>
<gene>
    <name evidence="1" type="primary">tig</name>
    <name type="ordered locus">Jann_1613</name>
</gene>
<dbReference type="EC" id="5.2.1.8" evidence="1"/>
<dbReference type="EMBL" id="CP000264">
    <property type="protein sequence ID" value="ABD54530.1"/>
    <property type="molecule type" value="Genomic_DNA"/>
</dbReference>
<dbReference type="RefSeq" id="WP_011454735.1">
    <property type="nucleotide sequence ID" value="NC_007802.1"/>
</dbReference>
<dbReference type="SMR" id="Q28RY2"/>
<dbReference type="STRING" id="290400.Jann_1613"/>
<dbReference type="KEGG" id="jan:Jann_1613"/>
<dbReference type="eggNOG" id="COG0544">
    <property type="taxonomic scope" value="Bacteria"/>
</dbReference>
<dbReference type="HOGENOM" id="CLU_033058_2_2_5"/>
<dbReference type="OrthoDB" id="9767721at2"/>
<dbReference type="Proteomes" id="UP000008326">
    <property type="component" value="Chromosome"/>
</dbReference>
<dbReference type="GO" id="GO:0005737">
    <property type="term" value="C:cytoplasm"/>
    <property type="evidence" value="ECO:0007669"/>
    <property type="project" value="UniProtKB-SubCell"/>
</dbReference>
<dbReference type="GO" id="GO:0003755">
    <property type="term" value="F:peptidyl-prolyl cis-trans isomerase activity"/>
    <property type="evidence" value="ECO:0007669"/>
    <property type="project" value="UniProtKB-UniRule"/>
</dbReference>
<dbReference type="GO" id="GO:0051301">
    <property type="term" value="P:cell division"/>
    <property type="evidence" value="ECO:0007669"/>
    <property type="project" value="UniProtKB-KW"/>
</dbReference>
<dbReference type="GO" id="GO:0006457">
    <property type="term" value="P:protein folding"/>
    <property type="evidence" value="ECO:0007669"/>
    <property type="project" value="UniProtKB-UniRule"/>
</dbReference>
<dbReference type="GO" id="GO:0015031">
    <property type="term" value="P:protein transport"/>
    <property type="evidence" value="ECO:0007669"/>
    <property type="project" value="UniProtKB-UniRule"/>
</dbReference>
<dbReference type="FunFam" id="3.10.50.40:FF:000001">
    <property type="entry name" value="Trigger factor"/>
    <property type="match status" value="1"/>
</dbReference>
<dbReference type="Gene3D" id="3.10.50.40">
    <property type="match status" value="1"/>
</dbReference>
<dbReference type="Gene3D" id="3.30.70.1050">
    <property type="entry name" value="Trigger factor ribosome-binding domain"/>
    <property type="match status" value="1"/>
</dbReference>
<dbReference type="Gene3D" id="1.10.3120.10">
    <property type="entry name" value="Trigger factor, C-terminal domain"/>
    <property type="match status" value="1"/>
</dbReference>
<dbReference type="HAMAP" id="MF_00303">
    <property type="entry name" value="Trigger_factor_Tig"/>
    <property type="match status" value="1"/>
</dbReference>
<dbReference type="InterPro" id="IPR046357">
    <property type="entry name" value="PPIase_dom_sf"/>
</dbReference>
<dbReference type="InterPro" id="IPR001179">
    <property type="entry name" value="PPIase_FKBP_dom"/>
</dbReference>
<dbReference type="InterPro" id="IPR005215">
    <property type="entry name" value="Trig_fac"/>
</dbReference>
<dbReference type="InterPro" id="IPR008880">
    <property type="entry name" value="Trigger_fac_C"/>
</dbReference>
<dbReference type="InterPro" id="IPR037041">
    <property type="entry name" value="Trigger_fac_C_sf"/>
</dbReference>
<dbReference type="InterPro" id="IPR008881">
    <property type="entry name" value="Trigger_fac_ribosome-bd_bac"/>
</dbReference>
<dbReference type="InterPro" id="IPR036611">
    <property type="entry name" value="Trigger_fac_ribosome-bd_sf"/>
</dbReference>
<dbReference type="InterPro" id="IPR027304">
    <property type="entry name" value="Trigger_fact/SurA_dom_sf"/>
</dbReference>
<dbReference type="NCBIfam" id="TIGR00115">
    <property type="entry name" value="tig"/>
    <property type="match status" value="1"/>
</dbReference>
<dbReference type="Pfam" id="PF00254">
    <property type="entry name" value="FKBP_C"/>
    <property type="match status" value="1"/>
</dbReference>
<dbReference type="Pfam" id="PF05698">
    <property type="entry name" value="Trigger_C"/>
    <property type="match status" value="1"/>
</dbReference>
<dbReference type="Pfam" id="PF05697">
    <property type="entry name" value="Trigger_N"/>
    <property type="match status" value="1"/>
</dbReference>
<dbReference type="PIRSF" id="PIRSF003095">
    <property type="entry name" value="Trigger_factor"/>
    <property type="match status" value="1"/>
</dbReference>
<dbReference type="SUPFAM" id="SSF54534">
    <property type="entry name" value="FKBP-like"/>
    <property type="match status" value="1"/>
</dbReference>
<dbReference type="SUPFAM" id="SSF109998">
    <property type="entry name" value="Triger factor/SurA peptide-binding domain-like"/>
    <property type="match status" value="1"/>
</dbReference>
<dbReference type="SUPFAM" id="SSF102735">
    <property type="entry name" value="Trigger factor ribosome-binding domain"/>
    <property type="match status" value="1"/>
</dbReference>
<dbReference type="PROSITE" id="PS50059">
    <property type="entry name" value="FKBP_PPIASE"/>
    <property type="match status" value="1"/>
</dbReference>
<name>TIG_JANSC</name>
<reference key="1">
    <citation type="submission" date="2006-02" db="EMBL/GenBank/DDBJ databases">
        <title>Complete sequence of chromosome of Jannaschia sp. CCS1.</title>
        <authorList>
            <consortium name="US DOE Joint Genome Institute"/>
            <person name="Copeland A."/>
            <person name="Lucas S."/>
            <person name="Lapidus A."/>
            <person name="Barry K."/>
            <person name="Detter J.C."/>
            <person name="Glavina del Rio T."/>
            <person name="Hammon N."/>
            <person name="Israni S."/>
            <person name="Pitluck S."/>
            <person name="Brettin T."/>
            <person name="Bruce D."/>
            <person name="Han C."/>
            <person name="Tapia R."/>
            <person name="Gilna P."/>
            <person name="Chertkov O."/>
            <person name="Saunders E."/>
            <person name="Schmutz J."/>
            <person name="Larimer F."/>
            <person name="Land M."/>
            <person name="Kyrpides N."/>
            <person name="Lykidis A."/>
            <person name="Moran M.A."/>
            <person name="Belas R."/>
            <person name="Ye W."/>
            <person name="Buchan A."/>
            <person name="Gonzalez J.M."/>
            <person name="Schell M.A."/>
            <person name="Richardson P."/>
        </authorList>
    </citation>
    <scope>NUCLEOTIDE SEQUENCE [LARGE SCALE GENOMIC DNA]</scope>
    <source>
        <strain>CCS1</strain>
    </source>
</reference>